<comment type="function">
    <text evidence="2">Mediates phosphorylation of MECP2. May regulate ciliogenesis.</text>
</comment>
<comment type="catalytic activity">
    <reaction>
        <text>L-seryl-[protein] + ATP = O-phospho-L-seryl-[protein] + ADP + H(+)</text>
        <dbReference type="Rhea" id="RHEA:17989"/>
        <dbReference type="Rhea" id="RHEA-COMP:9863"/>
        <dbReference type="Rhea" id="RHEA-COMP:11604"/>
        <dbReference type="ChEBI" id="CHEBI:15378"/>
        <dbReference type="ChEBI" id="CHEBI:29999"/>
        <dbReference type="ChEBI" id="CHEBI:30616"/>
        <dbReference type="ChEBI" id="CHEBI:83421"/>
        <dbReference type="ChEBI" id="CHEBI:456216"/>
        <dbReference type="EC" id="2.7.11.22"/>
    </reaction>
</comment>
<comment type="catalytic activity">
    <reaction>
        <text>L-threonyl-[protein] + ATP = O-phospho-L-threonyl-[protein] + ADP + H(+)</text>
        <dbReference type="Rhea" id="RHEA:46608"/>
        <dbReference type="Rhea" id="RHEA-COMP:11060"/>
        <dbReference type="Rhea" id="RHEA-COMP:11605"/>
        <dbReference type="ChEBI" id="CHEBI:15378"/>
        <dbReference type="ChEBI" id="CHEBI:30013"/>
        <dbReference type="ChEBI" id="CHEBI:30616"/>
        <dbReference type="ChEBI" id="CHEBI:61977"/>
        <dbReference type="ChEBI" id="CHEBI:456216"/>
        <dbReference type="EC" id="2.7.11.22"/>
    </reaction>
</comment>
<comment type="subunit">
    <text evidence="2">Interacts with MECP2.</text>
</comment>
<comment type="subcellular location">
    <subcellularLocation>
        <location evidence="2">Nucleus</location>
    </subcellularLocation>
    <subcellularLocation>
        <location evidence="2">Cytoplasm</location>
        <location evidence="2">Cytoskeleton</location>
        <location evidence="2">Cilium basal body</location>
    </subcellularLocation>
    <subcellularLocation>
        <location evidence="2">Cytoplasm</location>
        <location evidence="2">Cytoskeleton</location>
        <location evidence="2">Microtubule organizing center</location>
        <location evidence="2">Centrosome</location>
    </subcellularLocation>
</comment>
<comment type="alternative products">
    <event type="alternative splicing"/>
    <isoform>
        <id>Q3UTQ8-1</id>
        <name>1</name>
        <sequence type="displayed"/>
    </isoform>
    <isoform>
        <id>Q3UTQ8-2</id>
        <name>2</name>
        <sequence type="described" ref="VSP_022968 VSP_022969"/>
    </isoform>
</comment>
<comment type="PTM">
    <text evidence="1">Autophosphorylated.</text>
</comment>
<comment type="similarity">
    <text evidence="7">Belongs to the protein kinase superfamily. CMGC Ser/Thr protein kinase family. CDC2/CDKX subfamily.</text>
</comment>
<dbReference type="EC" id="2.7.11.22"/>
<dbReference type="EMBL" id="AK052380">
    <property type="protein sequence ID" value="BAC34965.1"/>
    <property type="molecule type" value="mRNA"/>
</dbReference>
<dbReference type="EMBL" id="AK139220">
    <property type="protein sequence ID" value="BAE23922.1"/>
    <property type="molecule type" value="mRNA"/>
</dbReference>
<dbReference type="EMBL" id="BC042705">
    <property type="protein sequence ID" value="AAH42705.1"/>
    <property type="molecule type" value="mRNA"/>
</dbReference>
<dbReference type="CCDS" id="CCDS53238.1">
    <molecule id="Q3UTQ8-1"/>
</dbReference>
<dbReference type="RefSeq" id="NP_001019795.1">
    <molecule id="Q3UTQ8-1"/>
    <property type="nucleotide sequence ID" value="NM_001024624.3"/>
</dbReference>
<dbReference type="SMR" id="Q3UTQ8"/>
<dbReference type="BioGRID" id="238295">
    <property type="interactions" value="88"/>
</dbReference>
<dbReference type="FunCoup" id="Q3UTQ8">
    <property type="interactions" value="781"/>
</dbReference>
<dbReference type="IntAct" id="Q3UTQ8">
    <property type="interactions" value="2"/>
</dbReference>
<dbReference type="MINT" id="Q3UTQ8"/>
<dbReference type="STRING" id="10090.ENSMUSP00000084342"/>
<dbReference type="GlyGen" id="Q3UTQ8">
    <property type="glycosylation" value="3 sites, 2 N-linked glycans (1 site), 1 O-linked glycan (1 site)"/>
</dbReference>
<dbReference type="iPTMnet" id="Q3UTQ8"/>
<dbReference type="PhosphoSitePlus" id="Q3UTQ8"/>
<dbReference type="PaxDb" id="10090-ENSMUSP00000084342"/>
<dbReference type="PeptideAtlas" id="Q3UTQ8"/>
<dbReference type="ProteomicsDB" id="281517">
    <molecule id="Q3UTQ8-1"/>
</dbReference>
<dbReference type="ProteomicsDB" id="281518">
    <molecule id="Q3UTQ8-2"/>
</dbReference>
<dbReference type="Antibodypedia" id="481">
    <property type="antibodies" value="234 antibodies from 32 providers"/>
</dbReference>
<dbReference type="DNASU" id="382253"/>
<dbReference type="Ensembl" id="ENSMUST00000087104.11">
    <molecule id="Q3UTQ8-1"/>
    <property type="protein sequence ID" value="ENSMUSP00000084342.5"/>
    <property type="gene ID" value="ENSMUSG00000031292.15"/>
</dbReference>
<dbReference type="GeneID" id="382253"/>
<dbReference type="KEGG" id="mmu:382253"/>
<dbReference type="UCSC" id="uc009utr.2">
    <molecule id="Q3UTQ8-1"/>
    <property type="organism name" value="mouse"/>
</dbReference>
<dbReference type="AGR" id="MGI:1278336"/>
<dbReference type="CTD" id="6792"/>
<dbReference type="MGI" id="MGI:1278336">
    <property type="gene designation" value="Cdkl5"/>
</dbReference>
<dbReference type="VEuPathDB" id="HostDB:ENSMUSG00000031292"/>
<dbReference type="eggNOG" id="KOG0593">
    <property type="taxonomic scope" value="Eukaryota"/>
</dbReference>
<dbReference type="GeneTree" id="ENSGT00940000157355"/>
<dbReference type="InParanoid" id="Q3UTQ8"/>
<dbReference type="OrthoDB" id="62822at9989"/>
<dbReference type="PhylomeDB" id="Q3UTQ8"/>
<dbReference type="TreeFam" id="TF101032"/>
<dbReference type="BRENDA" id="2.7.11.22">
    <property type="organism ID" value="3474"/>
</dbReference>
<dbReference type="BioGRID-ORCS" id="382253">
    <property type="hits" value="2 hits in 80 CRISPR screens"/>
</dbReference>
<dbReference type="CD-CODE" id="CE726F99">
    <property type="entry name" value="Postsynaptic density"/>
</dbReference>
<dbReference type="ChiTaRS" id="Cdkl5">
    <property type="organism name" value="mouse"/>
</dbReference>
<dbReference type="PRO" id="PR:Q3UTQ8"/>
<dbReference type="Proteomes" id="UP000000589">
    <property type="component" value="Chromosome X"/>
</dbReference>
<dbReference type="RNAct" id="Q3UTQ8">
    <property type="molecule type" value="protein"/>
</dbReference>
<dbReference type="Bgee" id="ENSMUSG00000031292">
    <property type="expression patterns" value="Expressed in medial dorsal nucleus of thalamus and 207 other cell types or tissues"/>
</dbReference>
<dbReference type="ExpressionAtlas" id="Q3UTQ8">
    <property type="expression patterns" value="baseline and differential"/>
</dbReference>
<dbReference type="GO" id="GO:0005813">
    <property type="term" value="C:centrosome"/>
    <property type="evidence" value="ECO:0000250"/>
    <property type="project" value="UniProtKB"/>
</dbReference>
<dbReference type="GO" id="GO:0036064">
    <property type="term" value="C:ciliary basal body"/>
    <property type="evidence" value="ECO:0000250"/>
    <property type="project" value="UniProtKB"/>
</dbReference>
<dbReference type="GO" id="GO:0097542">
    <property type="term" value="C:ciliary tip"/>
    <property type="evidence" value="ECO:0000250"/>
    <property type="project" value="UniProtKB"/>
</dbReference>
<dbReference type="GO" id="GO:0005737">
    <property type="term" value="C:cytoplasm"/>
    <property type="evidence" value="ECO:0007669"/>
    <property type="project" value="UniProtKB-KW"/>
</dbReference>
<dbReference type="GO" id="GO:0005634">
    <property type="term" value="C:nucleus"/>
    <property type="evidence" value="ECO:0007669"/>
    <property type="project" value="UniProtKB-SubCell"/>
</dbReference>
<dbReference type="GO" id="GO:0005524">
    <property type="term" value="F:ATP binding"/>
    <property type="evidence" value="ECO:0007669"/>
    <property type="project" value="UniProtKB-KW"/>
</dbReference>
<dbReference type="GO" id="GO:0004693">
    <property type="term" value="F:cyclin-dependent protein serine/threonine kinase activity"/>
    <property type="evidence" value="ECO:0007669"/>
    <property type="project" value="UniProtKB-EC"/>
</dbReference>
<dbReference type="GO" id="GO:0016301">
    <property type="term" value="F:kinase activity"/>
    <property type="evidence" value="ECO:0000266"/>
    <property type="project" value="MGI"/>
</dbReference>
<dbReference type="GO" id="GO:0004672">
    <property type="term" value="F:protein kinase activity"/>
    <property type="evidence" value="ECO:0000266"/>
    <property type="project" value="MGI"/>
</dbReference>
<dbReference type="GO" id="GO:0106310">
    <property type="term" value="F:protein serine kinase activity"/>
    <property type="evidence" value="ECO:0007669"/>
    <property type="project" value="RHEA"/>
</dbReference>
<dbReference type="GO" id="GO:0034504">
    <property type="term" value="P:protein localization to nucleus"/>
    <property type="evidence" value="ECO:0000315"/>
    <property type="project" value="MGI"/>
</dbReference>
<dbReference type="GO" id="GO:1902017">
    <property type="term" value="P:regulation of cilium assembly"/>
    <property type="evidence" value="ECO:0000250"/>
    <property type="project" value="UniProtKB"/>
</dbReference>
<dbReference type="CDD" id="cd07848">
    <property type="entry name" value="STKc_CDKL5"/>
    <property type="match status" value="1"/>
</dbReference>
<dbReference type="FunFam" id="3.30.200.20:FF:001093">
    <property type="entry name" value="Cyclin-dependent kinase-like 5"/>
    <property type="match status" value="1"/>
</dbReference>
<dbReference type="FunFam" id="1.10.510.10:FF:000127">
    <property type="entry name" value="Putative cyclin-dependent kinase-like 5"/>
    <property type="match status" value="1"/>
</dbReference>
<dbReference type="Gene3D" id="3.30.200.20">
    <property type="entry name" value="Phosphorylase Kinase, domain 1"/>
    <property type="match status" value="1"/>
</dbReference>
<dbReference type="Gene3D" id="1.10.510.10">
    <property type="entry name" value="Transferase(Phosphotransferase) domain 1"/>
    <property type="match status" value="1"/>
</dbReference>
<dbReference type="InterPro" id="IPR050108">
    <property type="entry name" value="CDK"/>
</dbReference>
<dbReference type="InterPro" id="IPR011009">
    <property type="entry name" value="Kinase-like_dom_sf"/>
</dbReference>
<dbReference type="InterPro" id="IPR000719">
    <property type="entry name" value="Prot_kinase_dom"/>
</dbReference>
<dbReference type="InterPro" id="IPR017441">
    <property type="entry name" value="Protein_kinase_ATP_BS"/>
</dbReference>
<dbReference type="InterPro" id="IPR008271">
    <property type="entry name" value="Ser/Thr_kinase_AS"/>
</dbReference>
<dbReference type="PANTHER" id="PTHR24056">
    <property type="entry name" value="CELL DIVISION PROTEIN KINASE"/>
    <property type="match status" value="1"/>
</dbReference>
<dbReference type="PANTHER" id="PTHR24056:SF111">
    <property type="entry name" value="CYCLIN-DEPENDENT KINASE-LIKE 5"/>
    <property type="match status" value="1"/>
</dbReference>
<dbReference type="Pfam" id="PF00069">
    <property type="entry name" value="Pkinase"/>
    <property type="match status" value="1"/>
</dbReference>
<dbReference type="SMART" id="SM00220">
    <property type="entry name" value="S_TKc"/>
    <property type="match status" value="1"/>
</dbReference>
<dbReference type="SUPFAM" id="SSF56112">
    <property type="entry name" value="Protein kinase-like (PK-like)"/>
    <property type="match status" value="1"/>
</dbReference>
<dbReference type="PROSITE" id="PS00107">
    <property type="entry name" value="PROTEIN_KINASE_ATP"/>
    <property type="match status" value="1"/>
</dbReference>
<dbReference type="PROSITE" id="PS50011">
    <property type="entry name" value="PROTEIN_KINASE_DOM"/>
    <property type="match status" value="1"/>
</dbReference>
<dbReference type="PROSITE" id="PS00108">
    <property type="entry name" value="PROTEIN_KINASE_ST"/>
    <property type="match status" value="1"/>
</dbReference>
<feature type="chain" id="PRO_0000275897" description="Cyclin-dependent kinase-like 5">
    <location>
        <begin position="1"/>
        <end position="938"/>
    </location>
</feature>
<feature type="domain" description="Protein kinase" evidence="3">
    <location>
        <begin position="13"/>
        <end position="297"/>
    </location>
</feature>
<feature type="region of interest" description="Disordered" evidence="5">
    <location>
        <begin position="298"/>
        <end position="348"/>
    </location>
</feature>
<feature type="region of interest" description="Disordered" evidence="5">
    <location>
        <begin position="382"/>
        <end position="566"/>
    </location>
</feature>
<feature type="region of interest" description="Disordered" evidence="5">
    <location>
        <begin position="646"/>
        <end position="865"/>
    </location>
</feature>
<feature type="region of interest" description="Disordered" evidence="5">
    <location>
        <begin position="877"/>
        <end position="938"/>
    </location>
</feature>
<feature type="compositionally biased region" description="Polar residues" evidence="5">
    <location>
        <begin position="319"/>
        <end position="331"/>
    </location>
</feature>
<feature type="compositionally biased region" description="Polar residues" evidence="5">
    <location>
        <begin position="382"/>
        <end position="402"/>
    </location>
</feature>
<feature type="compositionally biased region" description="Basic and acidic residues" evidence="5">
    <location>
        <begin position="407"/>
        <end position="417"/>
    </location>
</feature>
<feature type="compositionally biased region" description="Polar residues" evidence="5">
    <location>
        <begin position="434"/>
        <end position="462"/>
    </location>
</feature>
<feature type="compositionally biased region" description="Polar residues" evidence="5">
    <location>
        <begin position="473"/>
        <end position="482"/>
    </location>
</feature>
<feature type="compositionally biased region" description="Polar residues" evidence="5">
    <location>
        <begin position="494"/>
        <end position="548"/>
    </location>
</feature>
<feature type="compositionally biased region" description="Basic and acidic residues" evidence="5">
    <location>
        <begin position="549"/>
        <end position="559"/>
    </location>
</feature>
<feature type="compositionally biased region" description="Basic and acidic residues" evidence="5">
    <location>
        <begin position="679"/>
        <end position="704"/>
    </location>
</feature>
<feature type="compositionally biased region" description="Polar residues" evidence="5">
    <location>
        <begin position="728"/>
        <end position="748"/>
    </location>
</feature>
<feature type="compositionally biased region" description="Basic and acidic residues" evidence="5">
    <location>
        <begin position="769"/>
        <end position="778"/>
    </location>
</feature>
<feature type="compositionally biased region" description="Basic and acidic residues" evidence="5">
    <location>
        <begin position="817"/>
        <end position="827"/>
    </location>
</feature>
<feature type="compositionally biased region" description="Polar residues" evidence="5">
    <location>
        <begin position="880"/>
        <end position="891"/>
    </location>
</feature>
<feature type="active site" description="Proton acceptor" evidence="3 4">
    <location>
        <position position="135"/>
    </location>
</feature>
<feature type="binding site" evidence="3">
    <location>
        <begin position="19"/>
        <end position="27"/>
    </location>
    <ligand>
        <name>ATP</name>
        <dbReference type="ChEBI" id="CHEBI:30616"/>
    </ligand>
</feature>
<feature type="binding site" evidence="3">
    <location>
        <position position="42"/>
    </location>
    <ligand>
        <name>ATP</name>
        <dbReference type="ChEBI" id="CHEBI:30616"/>
    </ligand>
</feature>
<feature type="modified residue" description="Phosphoserine" evidence="9">
    <location>
        <position position="407"/>
    </location>
</feature>
<feature type="modified residue" description="Phosphoserine" evidence="2">
    <location>
        <position position="479"/>
    </location>
</feature>
<feature type="modified residue" description="Phosphoserine" evidence="2">
    <location>
        <position position="720"/>
    </location>
</feature>
<feature type="modified residue" description="Phosphoserine" evidence="2">
    <location>
        <position position="761"/>
    </location>
</feature>
<feature type="splice variant" id="VSP_022968" description="In isoform 2." evidence="6">
    <location>
        <begin position="1"/>
        <end position="401"/>
    </location>
</feature>
<feature type="splice variant" id="VSP_022969" description="In isoform 2." evidence="6">
    <original>IPHLLSPKE</original>
    <variation>MPLIPASKK</variation>
    <location>
        <begin position="402"/>
        <end position="410"/>
    </location>
</feature>
<name>CDKL5_MOUSE</name>
<organism>
    <name type="scientific">Mus musculus</name>
    <name type="common">Mouse</name>
    <dbReference type="NCBI Taxonomy" id="10090"/>
    <lineage>
        <taxon>Eukaryota</taxon>
        <taxon>Metazoa</taxon>
        <taxon>Chordata</taxon>
        <taxon>Craniata</taxon>
        <taxon>Vertebrata</taxon>
        <taxon>Euteleostomi</taxon>
        <taxon>Mammalia</taxon>
        <taxon>Eutheria</taxon>
        <taxon>Euarchontoglires</taxon>
        <taxon>Glires</taxon>
        <taxon>Rodentia</taxon>
        <taxon>Myomorpha</taxon>
        <taxon>Muroidea</taxon>
        <taxon>Muridae</taxon>
        <taxon>Murinae</taxon>
        <taxon>Mus</taxon>
        <taxon>Mus</taxon>
    </lineage>
</organism>
<evidence type="ECO:0000250" key="1"/>
<evidence type="ECO:0000250" key="2">
    <source>
        <dbReference type="UniProtKB" id="O76039"/>
    </source>
</evidence>
<evidence type="ECO:0000255" key="3">
    <source>
        <dbReference type="PROSITE-ProRule" id="PRU00159"/>
    </source>
</evidence>
<evidence type="ECO:0000255" key="4">
    <source>
        <dbReference type="PROSITE-ProRule" id="PRU10027"/>
    </source>
</evidence>
<evidence type="ECO:0000256" key="5">
    <source>
        <dbReference type="SAM" id="MobiDB-lite"/>
    </source>
</evidence>
<evidence type="ECO:0000303" key="6">
    <source>
    </source>
</evidence>
<evidence type="ECO:0000305" key="7"/>
<evidence type="ECO:0000312" key="8">
    <source>
        <dbReference type="MGI" id="MGI:1278336"/>
    </source>
</evidence>
<evidence type="ECO:0007744" key="9">
    <source>
    </source>
</evidence>
<keyword id="KW-0025">Alternative splicing</keyword>
<keyword id="KW-0067">ATP-binding</keyword>
<keyword id="KW-0966">Cell projection</keyword>
<keyword id="KW-0963">Cytoplasm</keyword>
<keyword id="KW-0206">Cytoskeleton</keyword>
<keyword id="KW-0418">Kinase</keyword>
<keyword id="KW-0547">Nucleotide-binding</keyword>
<keyword id="KW-0539">Nucleus</keyword>
<keyword id="KW-0597">Phosphoprotein</keyword>
<keyword id="KW-1185">Reference proteome</keyword>
<keyword id="KW-0723">Serine/threonine-protein kinase</keyword>
<keyword id="KW-0808">Transferase</keyword>
<sequence length="938" mass="105489">MKIPNIGNVMNKFEILGVVGEGAYGVVLKCRHKETHEIVAIKKFKDSEENEEVKETTLRELKMLRTLKQENIVELKEAFRRRGKLYLVFEYVEKNMLELLEEMPNGVPPEKVKSYIYQLIKAIHWCHKNDIVHRDIKPENLLISHNDVLKLCDFGFARNLSEGNNANYTEYVATRWYRSPELLLGAPYGKSVDMWSVGCILGELSDGQPLFPGESEIDQLFTIQKVLGPLPSEQMKLFYSNPRFHGLRFPAVNHPQSLERRYLGILNSVLLDLMKNLLKLDPADRYLTEQCLNHPTFQTQRLLDRSPSRSTKRKPYHVESSTLSNRNQSTKGAALQTHHRSNSKDIQNLSVGLPRAEEGLPANESFLNGNLAGATLSPMHTKTYQASTQPGSSSKDLTNNNIPHLLSPKEAKSKTEFDFNIDTKPSEGPGTKYLKSSTRSQQNRHSFMESSQSKAGTLQPSEKQSRHSYIDTIPQSSRSPSYRTKAKSHGALSDSKSVSNLSEARAQITETNTSRYFPSSCLDLNSPTSPTPTRHTDTRTLLSPSGRNNRNEGTLDSRRTTTRHSKTMEELKLPEHMDSSHSHSLSAPHESFSYGLGYTSPFSSQQRPHRHSMYVTRDKVRAKGLDGSLSIGQGMAARANSLQLLSPQPGEQLPPEMTVARPSVKESSREGASSFHTRQKSEGGVYHDPHSDDGTAPKENRHLYNDPVPRRVGSFYRVPSPRPDNSFHENNVSTRVSSLPSDSSSGTNHSKRQPGFDPWKSPENISHADQLKEKEKQGFFRSMKKKKKKTQTVPNTDGPDLLTLQKAIHSSSTASSRPKEWRPEKLSDLQTQSQPLKSLRKLLHLSSSTNHPASSDPRFQPLTAQQAKNSFSEIRIHPLSQATGGSSNIRQEPTPKGRPALQLPGSSLLRYNGWKHSRSRSSQPDEVIFLASHEKWKQ</sequence>
<proteinExistence type="evidence at protein level"/>
<protein>
    <recommendedName>
        <fullName evidence="7">Cyclin-dependent kinase-like 5</fullName>
        <ecNumber>2.7.11.22</ecNumber>
    </recommendedName>
</protein>
<gene>
    <name evidence="8" type="primary">Cdkl5</name>
</gene>
<reference key="1">
    <citation type="journal article" date="2005" name="Science">
        <title>The transcriptional landscape of the mammalian genome.</title>
        <authorList>
            <person name="Carninci P."/>
            <person name="Kasukawa T."/>
            <person name="Katayama S."/>
            <person name="Gough J."/>
            <person name="Frith M.C."/>
            <person name="Maeda N."/>
            <person name="Oyama R."/>
            <person name="Ravasi T."/>
            <person name="Lenhard B."/>
            <person name="Wells C."/>
            <person name="Kodzius R."/>
            <person name="Shimokawa K."/>
            <person name="Bajic V.B."/>
            <person name="Brenner S.E."/>
            <person name="Batalov S."/>
            <person name="Forrest A.R."/>
            <person name="Zavolan M."/>
            <person name="Davis M.J."/>
            <person name="Wilming L.G."/>
            <person name="Aidinis V."/>
            <person name="Allen J.E."/>
            <person name="Ambesi-Impiombato A."/>
            <person name="Apweiler R."/>
            <person name="Aturaliya R.N."/>
            <person name="Bailey T.L."/>
            <person name="Bansal M."/>
            <person name="Baxter L."/>
            <person name="Beisel K.W."/>
            <person name="Bersano T."/>
            <person name="Bono H."/>
            <person name="Chalk A.M."/>
            <person name="Chiu K.P."/>
            <person name="Choudhary V."/>
            <person name="Christoffels A."/>
            <person name="Clutterbuck D.R."/>
            <person name="Crowe M.L."/>
            <person name="Dalla E."/>
            <person name="Dalrymple B.P."/>
            <person name="de Bono B."/>
            <person name="Della Gatta G."/>
            <person name="di Bernardo D."/>
            <person name="Down T."/>
            <person name="Engstrom P."/>
            <person name="Fagiolini M."/>
            <person name="Faulkner G."/>
            <person name="Fletcher C.F."/>
            <person name="Fukushima T."/>
            <person name="Furuno M."/>
            <person name="Futaki S."/>
            <person name="Gariboldi M."/>
            <person name="Georgii-Hemming P."/>
            <person name="Gingeras T.R."/>
            <person name="Gojobori T."/>
            <person name="Green R.E."/>
            <person name="Gustincich S."/>
            <person name="Harbers M."/>
            <person name="Hayashi Y."/>
            <person name="Hensch T.K."/>
            <person name="Hirokawa N."/>
            <person name="Hill D."/>
            <person name="Huminiecki L."/>
            <person name="Iacono M."/>
            <person name="Ikeo K."/>
            <person name="Iwama A."/>
            <person name="Ishikawa T."/>
            <person name="Jakt M."/>
            <person name="Kanapin A."/>
            <person name="Katoh M."/>
            <person name="Kawasawa Y."/>
            <person name="Kelso J."/>
            <person name="Kitamura H."/>
            <person name="Kitano H."/>
            <person name="Kollias G."/>
            <person name="Krishnan S.P."/>
            <person name="Kruger A."/>
            <person name="Kummerfeld S.K."/>
            <person name="Kurochkin I.V."/>
            <person name="Lareau L.F."/>
            <person name="Lazarevic D."/>
            <person name="Lipovich L."/>
            <person name="Liu J."/>
            <person name="Liuni S."/>
            <person name="McWilliam S."/>
            <person name="Madan Babu M."/>
            <person name="Madera M."/>
            <person name="Marchionni L."/>
            <person name="Matsuda H."/>
            <person name="Matsuzawa S."/>
            <person name="Miki H."/>
            <person name="Mignone F."/>
            <person name="Miyake S."/>
            <person name="Morris K."/>
            <person name="Mottagui-Tabar S."/>
            <person name="Mulder N."/>
            <person name="Nakano N."/>
            <person name="Nakauchi H."/>
            <person name="Ng P."/>
            <person name="Nilsson R."/>
            <person name="Nishiguchi S."/>
            <person name="Nishikawa S."/>
            <person name="Nori F."/>
            <person name="Ohara O."/>
            <person name="Okazaki Y."/>
            <person name="Orlando V."/>
            <person name="Pang K.C."/>
            <person name="Pavan W.J."/>
            <person name="Pavesi G."/>
            <person name="Pesole G."/>
            <person name="Petrovsky N."/>
            <person name="Piazza S."/>
            <person name="Reed J."/>
            <person name="Reid J.F."/>
            <person name="Ring B.Z."/>
            <person name="Ringwald M."/>
            <person name="Rost B."/>
            <person name="Ruan Y."/>
            <person name="Salzberg S.L."/>
            <person name="Sandelin A."/>
            <person name="Schneider C."/>
            <person name="Schoenbach C."/>
            <person name="Sekiguchi K."/>
            <person name="Semple C.A."/>
            <person name="Seno S."/>
            <person name="Sessa L."/>
            <person name="Sheng Y."/>
            <person name="Shibata Y."/>
            <person name="Shimada H."/>
            <person name="Shimada K."/>
            <person name="Silva D."/>
            <person name="Sinclair B."/>
            <person name="Sperling S."/>
            <person name="Stupka E."/>
            <person name="Sugiura K."/>
            <person name="Sultana R."/>
            <person name="Takenaka Y."/>
            <person name="Taki K."/>
            <person name="Tammoja K."/>
            <person name="Tan S.L."/>
            <person name="Tang S."/>
            <person name="Taylor M.S."/>
            <person name="Tegner J."/>
            <person name="Teichmann S.A."/>
            <person name="Ueda H.R."/>
            <person name="van Nimwegen E."/>
            <person name="Verardo R."/>
            <person name="Wei C.L."/>
            <person name="Yagi K."/>
            <person name="Yamanishi H."/>
            <person name="Zabarovsky E."/>
            <person name="Zhu S."/>
            <person name="Zimmer A."/>
            <person name="Hide W."/>
            <person name="Bult C."/>
            <person name="Grimmond S.M."/>
            <person name="Teasdale R.D."/>
            <person name="Liu E.T."/>
            <person name="Brusic V."/>
            <person name="Quackenbush J."/>
            <person name="Wahlestedt C."/>
            <person name="Mattick J.S."/>
            <person name="Hume D.A."/>
            <person name="Kai C."/>
            <person name="Sasaki D."/>
            <person name="Tomaru Y."/>
            <person name="Fukuda S."/>
            <person name="Kanamori-Katayama M."/>
            <person name="Suzuki M."/>
            <person name="Aoki J."/>
            <person name="Arakawa T."/>
            <person name="Iida J."/>
            <person name="Imamura K."/>
            <person name="Itoh M."/>
            <person name="Kato T."/>
            <person name="Kawaji H."/>
            <person name="Kawagashira N."/>
            <person name="Kawashima T."/>
            <person name="Kojima M."/>
            <person name="Kondo S."/>
            <person name="Konno H."/>
            <person name="Nakano K."/>
            <person name="Ninomiya N."/>
            <person name="Nishio T."/>
            <person name="Okada M."/>
            <person name="Plessy C."/>
            <person name="Shibata K."/>
            <person name="Shiraki T."/>
            <person name="Suzuki S."/>
            <person name="Tagami M."/>
            <person name="Waki K."/>
            <person name="Watahiki A."/>
            <person name="Okamura-Oho Y."/>
            <person name="Suzuki H."/>
            <person name="Kawai J."/>
            <person name="Hayashizaki Y."/>
        </authorList>
    </citation>
    <scope>NUCLEOTIDE SEQUENCE [LARGE SCALE MRNA] (ISOFORM 1)</scope>
    <source>
        <strain>C57BL/6J</strain>
        <tissue>Cerebellum</tissue>
        <tissue>Heart</tissue>
    </source>
</reference>
<reference key="2">
    <citation type="journal article" date="2004" name="Genome Res.">
        <title>The status, quality, and expansion of the NIH full-length cDNA project: the Mammalian Gene Collection (MGC).</title>
        <authorList>
            <consortium name="The MGC Project Team"/>
        </authorList>
    </citation>
    <scope>NUCLEOTIDE SEQUENCE [LARGE SCALE MRNA] OF 1-788 (ISOFORM 2)</scope>
    <source>
        <strain>Czech II</strain>
        <tissue>Mammary tumor</tissue>
    </source>
</reference>
<reference key="3">
    <citation type="journal article" date="2010" name="Cell">
        <title>A tissue-specific atlas of mouse protein phosphorylation and expression.</title>
        <authorList>
            <person name="Huttlin E.L."/>
            <person name="Jedrychowski M.P."/>
            <person name="Elias J.E."/>
            <person name="Goswami T."/>
            <person name="Rad R."/>
            <person name="Beausoleil S.A."/>
            <person name="Villen J."/>
            <person name="Haas W."/>
            <person name="Sowa M.E."/>
            <person name="Gygi S.P."/>
        </authorList>
    </citation>
    <scope>PHOSPHORYLATION [LARGE SCALE ANALYSIS] AT SER-407</scope>
    <scope>IDENTIFICATION BY MASS SPECTROMETRY [LARGE SCALE ANALYSIS]</scope>
    <source>
        <tissue>Brain</tissue>
        <tissue>Brown adipose tissue</tissue>
        <tissue>Heart</tissue>
        <tissue>Lung</tissue>
    </source>
</reference>
<accession>Q3UTQ8</accession>
<accession>Q05BK3</accession>
<accession>Q8BWI8</accession>